<feature type="chain" id="PRO_1000135368" description="Histidine biosynthesis bifunctional protein HisB">
    <location>
        <begin position="1"/>
        <end position="361"/>
    </location>
</feature>
<feature type="region of interest" description="Histidinol-phosphatase" evidence="1">
    <location>
        <begin position="1"/>
        <end position="172"/>
    </location>
</feature>
<feature type="region of interest" description="Imidazoleglycerol-phosphate dehydratase" evidence="1">
    <location>
        <begin position="173"/>
        <end position="361"/>
    </location>
</feature>
<feature type="active site" description="Nucleophile" evidence="1">
    <location>
        <position position="9"/>
    </location>
</feature>
<feature type="active site" description="Proton donor" evidence="1">
    <location>
        <position position="11"/>
    </location>
</feature>
<feature type="binding site" evidence="1">
    <location>
        <position position="9"/>
    </location>
    <ligand>
        <name>Mg(2+)</name>
        <dbReference type="ChEBI" id="CHEBI:18420"/>
    </ligand>
</feature>
<feature type="binding site" evidence="1">
    <location>
        <position position="11"/>
    </location>
    <ligand>
        <name>Mg(2+)</name>
        <dbReference type="ChEBI" id="CHEBI:18420"/>
    </ligand>
</feature>
<feature type="binding site" evidence="1">
    <location>
        <position position="92"/>
    </location>
    <ligand>
        <name>Zn(2+)</name>
        <dbReference type="ChEBI" id="CHEBI:29105"/>
    </ligand>
</feature>
<feature type="binding site" evidence="1">
    <location>
        <position position="94"/>
    </location>
    <ligand>
        <name>Zn(2+)</name>
        <dbReference type="ChEBI" id="CHEBI:29105"/>
    </ligand>
</feature>
<feature type="binding site" evidence="1">
    <location>
        <position position="100"/>
    </location>
    <ligand>
        <name>Zn(2+)</name>
        <dbReference type="ChEBI" id="CHEBI:29105"/>
    </ligand>
</feature>
<feature type="binding site" evidence="1">
    <location>
        <position position="102"/>
    </location>
    <ligand>
        <name>Zn(2+)</name>
        <dbReference type="ChEBI" id="CHEBI:29105"/>
    </ligand>
</feature>
<feature type="binding site" evidence="1">
    <location>
        <position position="129"/>
    </location>
    <ligand>
        <name>Mg(2+)</name>
        <dbReference type="ChEBI" id="CHEBI:18420"/>
    </ligand>
</feature>
<keyword id="KW-0028">Amino-acid biosynthesis</keyword>
<keyword id="KW-0963">Cytoplasm</keyword>
<keyword id="KW-0368">Histidine biosynthesis</keyword>
<keyword id="KW-0378">Hydrolase</keyword>
<keyword id="KW-0456">Lyase</keyword>
<keyword id="KW-0460">Magnesium</keyword>
<keyword id="KW-0479">Metal-binding</keyword>
<keyword id="KW-0511">Multifunctional enzyme</keyword>
<keyword id="KW-0862">Zinc</keyword>
<sequence length="361" mass="41289">MSQPTLFIDRDGTLIDEPKTDFQIDSLEKLKLERNVIPALLKLKDHYRFVMVSNQDGLGTDSFPQENFDKPHNAMLEIFRSQGIEFDAILICPHKPEDNCDCRKPKIKLLKKYIDKKLFDPAHSFVIGDRATDVQLAENLGIQALQYHPEKLDWDLIVEKLLPKTTACERPPRYAEVVRTTKETDIKVQVWLDETGVNQISTGVGFFDHMLDQIATHGGFRMNVQCKGDLWIDEHHTVEDTALALGTALKQALGDKRGIQRFGFVLPMDECKAECTMDLSGRPYFKFKAKFKREKVGDFSTEMTEHFFQSIAYTLMATLHLKTQGDNDHHKIESLFKVFGRTLRQCIKVEGNELPSSKGVL</sequence>
<name>HIS7_ACTP7</name>
<proteinExistence type="inferred from homology"/>
<reference key="1">
    <citation type="submission" date="2008-06" db="EMBL/GenBank/DDBJ databases">
        <title>Genome and proteome analysis of A. pleuropneumoniae serotype 7.</title>
        <authorList>
            <person name="Linke B."/>
            <person name="Buettner F."/>
            <person name="Martinez-Arias R."/>
            <person name="Goesmann A."/>
            <person name="Baltes N."/>
            <person name="Tegetmeyer H."/>
            <person name="Singh M."/>
            <person name="Gerlach G.F."/>
        </authorList>
    </citation>
    <scope>NUCLEOTIDE SEQUENCE [LARGE SCALE GENOMIC DNA]</scope>
    <source>
        <strain>AP76</strain>
    </source>
</reference>
<comment type="catalytic activity">
    <reaction evidence="1">
        <text>D-erythro-1-(imidazol-4-yl)glycerol 3-phosphate = 3-(imidazol-4-yl)-2-oxopropyl phosphate + H2O</text>
        <dbReference type="Rhea" id="RHEA:11040"/>
        <dbReference type="ChEBI" id="CHEBI:15377"/>
        <dbReference type="ChEBI" id="CHEBI:57766"/>
        <dbReference type="ChEBI" id="CHEBI:58278"/>
        <dbReference type="EC" id="4.2.1.19"/>
    </reaction>
</comment>
<comment type="catalytic activity">
    <reaction evidence="1">
        <text>L-histidinol phosphate + H2O = L-histidinol + phosphate</text>
        <dbReference type="Rhea" id="RHEA:14465"/>
        <dbReference type="ChEBI" id="CHEBI:15377"/>
        <dbReference type="ChEBI" id="CHEBI:43474"/>
        <dbReference type="ChEBI" id="CHEBI:57699"/>
        <dbReference type="ChEBI" id="CHEBI:57980"/>
        <dbReference type="EC" id="3.1.3.15"/>
    </reaction>
</comment>
<comment type="cofactor">
    <cofactor evidence="1">
        <name>Mg(2+)</name>
        <dbReference type="ChEBI" id="CHEBI:18420"/>
    </cofactor>
</comment>
<comment type="cofactor">
    <cofactor evidence="1">
        <name>Zn(2+)</name>
        <dbReference type="ChEBI" id="CHEBI:29105"/>
    </cofactor>
</comment>
<comment type="pathway">
    <text evidence="1">Amino-acid biosynthesis; L-histidine biosynthesis; L-histidine from 5-phospho-alpha-D-ribose 1-diphosphate: step 6/9.</text>
</comment>
<comment type="pathway">
    <text evidence="1">Amino-acid biosynthesis; L-histidine biosynthesis; L-histidine from 5-phospho-alpha-D-ribose 1-diphosphate: step 8/9.</text>
</comment>
<comment type="subcellular location">
    <subcellularLocation>
        <location evidence="1">Cytoplasm</location>
    </subcellularLocation>
</comment>
<comment type="similarity">
    <text evidence="1">In the N-terminal section; belongs to the histidinol-phosphatase family.</text>
</comment>
<comment type="similarity">
    <text evidence="1">In the C-terminal section; belongs to the imidazoleglycerol-phosphate dehydratase family.</text>
</comment>
<protein>
    <recommendedName>
        <fullName evidence="1">Histidine biosynthesis bifunctional protein HisB</fullName>
    </recommendedName>
    <domain>
        <recommendedName>
            <fullName evidence="1">Histidinol-phosphatase</fullName>
            <ecNumber evidence="1">3.1.3.15</ecNumber>
        </recommendedName>
    </domain>
    <domain>
        <recommendedName>
            <fullName evidence="1">Imidazoleglycerol-phosphate dehydratase</fullName>
            <shortName evidence="1">IGPD</shortName>
            <ecNumber evidence="1">4.2.1.19</ecNumber>
        </recommendedName>
    </domain>
</protein>
<evidence type="ECO:0000255" key="1">
    <source>
        <dbReference type="HAMAP-Rule" id="MF_01022"/>
    </source>
</evidence>
<accession>B3GZG9</accession>
<gene>
    <name evidence="1" type="primary">hisB</name>
    <name type="ordered locus">APP7_2110</name>
</gene>
<organism>
    <name type="scientific">Actinobacillus pleuropneumoniae serotype 7 (strain AP76)</name>
    <dbReference type="NCBI Taxonomy" id="537457"/>
    <lineage>
        <taxon>Bacteria</taxon>
        <taxon>Pseudomonadati</taxon>
        <taxon>Pseudomonadota</taxon>
        <taxon>Gammaproteobacteria</taxon>
        <taxon>Pasteurellales</taxon>
        <taxon>Pasteurellaceae</taxon>
        <taxon>Actinobacillus</taxon>
    </lineage>
</organism>
<dbReference type="EC" id="3.1.3.15" evidence="1"/>
<dbReference type="EC" id="4.2.1.19" evidence="1"/>
<dbReference type="EMBL" id="CP001091">
    <property type="protein sequence ID" value="ACE62762.1"/>
    <property type="molecule type" value="Genomic_DNA"/>
</dbReference>
<dbReference type="RefSeq" id="WP_005618458.1">
    <property type="nucleotide sequence ID" value="NC_010939.1"/>
</dbReference>
<dbReference type="SMR" id="B3GZG9"/>
<dbReference type="KEGG" id="apa:APP7_2110"/>
<dbReference type="HOGENOM" id="CLU_044308_0_0_6"/>
<dbReference type="UniPathway" id="UPA00031">
    <property type="reaction ID" value="UER00011"/>
</dbReference>
<dbReference type="UniPathway" id="UPA00031">
    <property type="reaction ID" value="UER00013"/>
</dbReference>
<dbReference type="Proteomes" id="UP000001226">
    <property type="component" value="Chromosome"/>
</dbReference>
<dbReference type="GO" id="GO:0005737">
    <property type="term" value="C:cytoplasm"/>
    <property type="evidence" value="ECO:0007669"/>
    <property type="project" value="UniProtKB-SubCell"/>
</dbReference>
<dbReference type="GO" id="GO:0004401">
    <property type="term" value="F:histidinol-phosphatase activity"/>
    <property type="evidence" value="ECO:0007669"/>
    <property type="project" value="UniProtKB-UniRule"/>
</dbReference>
<dbReference type="GO" id="GO:0004424">
    <property type="term" value="F:imidazoleglycerol-phosphate dehydratase activity"/>
    <property type="evidence" value="ECO:0007669"/>
    <property type="project" value="UniProtKB-UniRule"/>
</dbReference>
<dbReference type="GO" id="GO:0046872">
    <property type="term" value="F:metal ion binding"/>
    <property type="evidence" value="ECO:0007669"/>
    <property type="project" value="UniProtKB-KW"/>
</dbReference>
<dbReference type="GO" id="GO:0000105">
    <property type="term" value="P:L-histidine biosynthetic process"/>
    <property type="evidence" value="ECO:0007669"/>
    <property type="project" value="UniProtKB-UniRule"/>
</dbReference>
<dbReference type="CDD" id="cd07503">
    <property type="entry name" value="HAD_HisB-N"/>
    <property type="match status" value="1"/>
</dbReference>
<dbReference type="CDD" id="cd07914">
    <property type="entry name" value="IGPD"/>
    <property type="match status" value="1"/>
</dbReference>
<dbReference type="FunFam" id="3.40.50.1000:FF:000061">
    <property type="entry name" value="Histidine biosynthesis bifunctional protein HisB"/>
    <property type="match status" value="1"/>
</dbReference>
<dbReference type="FunFam" id="3.30.230.40:FF:000001">
    <property type="entry name" value="Imidazoleglycerol-phosphate dehydratase HisB"/>
    <property type="match status" value="1"/>
</dbReference>
<dbReference type="FunFam" id="3.30.230.40:FF:000003">
    <property type="entry name" value="Imidazoleglycerol-phosphate dehydratase HisB"/>
    <property type="match status" value="1"/>
</dbReference>
<dbReference type="Gene3D" id="3.40.50.1000">
    <property type="entry name" value="HAD superfamily/HAD-like"/>
    <property type="match status" value="1"/>
</dbReference>
<dbReference type="Gene3D" id="3.30.230.40">
    <property type="entry name" value="Imidazole glycerol phosphate dehydratase, domain 1"/>
    <property type="match status" value="2"/>
</dbReference>
<dbReference type="HAMAP" id="MF_01022">
    <property type="entry name" value="Bifunc_HisB"/>
    <property type="match status" value="1"/>
</dbReference>
<dbReference type="HAMAP" id="MF_00076">
    <property type="entry name" value="HisB"/>
    <property type="match status" value="1"/>
</dbReference>
<dbReference type="InterPro" id="IPR036412">
    <property type="entry name" value="HAD-like_sf"/>
</dbReference>
<dbReference type="InterPro" id="IPR006549">
    <property type="entry name" value="HAD-SF_hydro_IIIA"/>
</dbReference>
<dbReference type="InterPro" id="IPR023214">
    <property type="entry name" value="HAD_sf"/>
</dbReference>
<dbReference type="InterPro" id="IPR020566">
    <property type="entry name" value="His_synth_bifunc_HisB"/>
</dbReference>
<dbReference type="InterPro" id="IPR005954">
    <property type="entry name" value="HisB_N"/>
</dbReference>
<dbReference type="InterPro" id="IPR006543">
    <property type="entry name" value="Histidinol-phos"/>
</dbReference>
<dbReference type="InterPro" id="IPR038494">
    <property type="entry name" value="IGPD_sf"/>
</dbReference>
<dbReference type="InterPro" id="IPR000807">
    <property type="entry name" value="ImidazoleglycerolP_deHydtase"/>
</dbReference>
<dbReference type="InterPro" id="IPR020565">
    <property type="entry name" value="ImidazoleglycerP_deHydtase_CS"/>
</dbReference>
<dbReference type="InterPro" id="IPR020568">
    <property type="entry name" value="Ribosomal_Su5_D2-typ_SF"/>
</dbReference>
<dbReference type="NCBIfam" id="TIGR01662">
    <property type="entry name" value="HAD-SF-IIIA"/>
    <property type="match status" value="1"/>
</dbReference>
<dbReference type="NCBIfam" id="TIGR01261">
    <property type="entry name" value="hisB_Nterm"/>
    <property type="match status" value="1"/>
</dbReference>
<dbReference type="NCBIfam" id="TIGR01656">
    <property type="entry name" value="Histidinol-ppas"/>
    <property type="match status" value="1"/>
</dbReference>
<dbReference type="NCBIfam" id="NF002111">
    <property type="entry name" value="PRK00951.2-1"/>
    <property type="match status" value="1"/>
</dbReference>
<dbReference type="NCBIfam" id="NF002114">
    <property type="entry name" value="PRK00951.2-4"/>
    <property type="match status" value="1"/>
</dbReference>
<dbReference type="NCBIfam" id="NF003937">
    <property type="entry name" value="PRK05446.1"/>
    <property type="match status" value="1"/>
</dbReference>
<dbReference type="PANTHER" id="PTHR23133:SF2">
    <property type="entry name" value="IMIDAZOLEGLYCEROL-PHOSPHATE DEHYDRATASE"/>
    <property type="match status" value="1"/>
</dbReference>
<dbReference type="PANTHER" id="PTHR23133">
    <property type="entry name" value="IMIDAZOLEGLYCEROL-PHOSPHATE DEHYDRATASE HIS7"/>
    <property type="match status" value="1"/>
</dbReference>
<dbReference type="Pfam" id="PF13242">
    <property type="entry name" value="Hydrolase_like"/>
    <property type="match status" value="1"/>
</dbReference>
<dbReference type="Pfam" id="PF00475">
    <property type="entry name" value="IGPD"/>
    <property type="match status" value="1"/>
</dbReference>
<dbReference type="SUPFAM" id="SSF56784">
    <property type="entry name" value="HAD-like"/>
    <property type="match status" value="1"/>
</dbReference>
<dbReference type="SUPFAM" id="SSF54211">
    <property type="entry name" value="Ribosomal protein S5 domain 2-like"/>
    <property type="match status" value="2"/>
</dbReference>
<dbReference type="PROSITE" id="PS00954">
    <property type="entry name" value="IGP_DEHYDRATASE_1"/>
    <property type="match status" value="1"/>
</dbReference>
<dbReference type="PROSITE" id="PS00955">
    <property type="entry name" value="IGP_DEHYDRATASE_2"/>
    <property type="match status" value="1"/>
</dbReference>